<evidence type="ECO:0000269" key="1">
    <source>
    </source>
</evidence>
<evidence type="ECO:0000269" key="2">
    <source>
    </source>
</evidence>
<evidence type="ECO:0000269" key="3">
    <source>
    </source>
</evidence>
<evidence type="ECO:0000305" key="4"/>
<evidence type="ECO:0007744" key="5">
    <source>
    </source>
</evidence>
<evidence type="ECO:0007829" key="6">
    <source>
        <dbReference type="PDB" id="1Z6X"/>
    </source>
</evidence>
<proteinExistence type="evidence at protein level"/>
<gene>
    <name type="primary">ARF4</name>
    <name type="synonym">ARF2</name>
</gene>
<feature type="initiator methionine" description="Removed" evidence="1">
    <location>
        <position position="1"/>
    </location>
</feature>
<feature type="chain" id="PRO_0000207391" description="ADP-ribosylation factor 4">
    <location>
        <begin position="2"/>
        <end position="180"/>
    </location>
</feature>
<feature type="binding site">
    <location>
        <begin position="24"/>
        <end position="31"/>
    </location>
    <ligand>
        <name>GTP</name>
        <dbReference type="ChEBI" id="CHEBI:37565"/>
    </ligand>
</feature>
<feature type="binding site">
    <location>
        <begin position="67"/>
        <end position="71"/>
    </location>
    <ligand>
        <name>GTP</name>
        <dbReference type="ChEBI" id="CHEBI:37565"/>
    </ligand>
</feature>
<feature type="binding site">
    <location>
        <begin position="126"/>
        <end position="129"/>
    </location>
    <ligand>
        <name>GTP</name>
        <dbReference type="ChEBI" id="CHEBI:37565"/>
    </ligand>
</feature>
<feature type="modified residue" description="Phosphoserine" evidence="5">
    <location>
        <position position="147"/>
    </location>
</feature>
<feature type="lipid moiety-binding region" description="N-myristoyl glycine" evidence="1">
    <location>
        <position position="2"/>
    </location>
</feature>
<feature type="sequence variant" id="VAR_048317" description="In dbSNP:rs11550597.">
    <original>V</original>
    <variation>A</variation>
    <location>
        <position position="68"/>
    </location>
</feature>
<feature type="helix" evidence="6">
    <location>
        <begin position="5"/>
        <end position="8"/>
    </location>
</feature>
<feature type="turn" evidence="6">
    <location>
        <begin position="9"/>
        <end position="12"/>
    </location>
</feature>
<feature type="strand" evidence="6">
    <location>
        <begin position="14"/>
        <end position="16"/>
    </location>
</feature>
<feature type="strand" evidence="6">
    <location>
        <begin position="18"/>
        <end position="25"/>
    </location>
</feature>
<feature type="helix" evidence="6">
    <location>
        <begin position="30"/>
        <end position="37"/>
    </location>
</feature>
<feature type="strand" evidence="6">
    <location>
        <begin position="42"/>
        <end position="48"/>
    </location>
</feature>
<feature type="strand" evidence="6">
    <location>
        <begin position="51"/>
        <end position="57"/>
    </location>
</feature>
<feature type="strand" evidence="6">
    <location>
        <begin position="59"/>
        <end position="67"/>
    </location>
</feature>
<feature type="strand" evidence="6">
    <location>
        <begin position="69"/>
        <end position="71"/>
    </location>
</feature>
<feature type="helix" evidence="6">
    <location>
        <begin position="77"/>
        <end position="80"/>
    </location>
</feature>
<feature type="strand" evidence="6">
    <location>
        <begin position="83"/>
        <end position="95"/>
    </location>
</feature>
<feature type="helix" evidence="6">
    <location>
        <begin position="97"/>
        <end position="99"/>
    </location>
</feature>
<feature type="helix" evidence="6">
    <location>
        <begin position="100"/>
        <end position="112"/>
    </location>
</feature>
<feature type="helix" evidence="6">
    <location>
        <begin position="114"/>
        <end position="116"/>
    </location>
</feature>
<feature type="strand" evidence="6">
    <location>
        <begin position="120"/>
        <end position="126"/>
    </location>
</feature>
<feature type="helix" evidence="6">
    <location>
        <begin position="136"/>
        <end position="143"/>
    </location>
</feature>
<feature type="helix" evidence="6">
    <location>
        <begin position="145"/>
        <end position="147"/>
    </location>
</feature>
<feature type="strand" evidence="6">
    <location>
        <begin position="153"/>
        <end position="157"/>
    </location>
</feature>
<feature type="helix" evidence="6">
    <location>
        <begin position="160"/>
        <end position="162"/>
    </location>
</feature>
<feature type="helix" evidence="6">
    <location>
        <begin position="166"/>
        <end position="177"/>
    </location>
</feature>
<keyword id="KW-0002">3D-structure</keyword>
<keyword id="KW-0931">ER-Golgi transport</keyword>
<keyword id="KW-0333">Golgi apparatus</keyword>
<keyword id="KW-0342">GTP-binding</keyword>
<keyword id="KW-0449">Lipoprotein</keyword>
<keyword id="KW-0472">Membrane</keyword>
<keyword id="KW-0519">Myristate</keyword>
<keyword id="KW-0547">Nucleotide-binding</keyword>
<keyword id="KW-0597">Phosphoprotein</keyword>
<keyword id="KW-0653">Protein transport</keyword>
<keyword id="KW-1267">Proteomics identification</keyword>
<keyword id="KW-1185">Reference proteome</keyword>
<keyword id="KW-0813">Transport</keyword>
<accession>P18085</accession>
<accession>B2R7J7</accession>
<accession>P21371</accession>
<sequence length="180" mass="20511">MGLTISSLFSRLFGKKQMRILMVGLDAAGKTTILYKLKLGEIVTTIPTIGFNVETVEYKNICFTVWDVGGQDRIRPLWKHYFQNTQGLIFVVDSNDRERIQEVADELQKMLLVDELRDAVLLLFANKQDLPNAMAISEMTDKLGLQSLRNRTWYVQATCATQGTGLYEGLDWLSNELSKR</sequence>
<comment type="function">
    <text evidence="2">GTP-binding protein that functions as an allosteric activator of the cholera toxin catalytic subunit, an ADP-ribosyltransferase. Involved in protein trafficking; may modulate vesicle budding and uncoating within the Golgi apparatus. Part of the ciliary targeting complex containing Rab11, ASAP1, Rabin8/RAB3IP, RAB11FIP3 and ARF4, which direct preciliary vesicle trafficking to mother centriole and ciliogenesis initiation (PubMed:25673879).</text>
</comment>
<comment type="subunit">
    <text evidence="2 3">Forms a complex containing RAB11A, ASAP1, RAB3IP, RAP11FIP3 and ARF4; the complex promotes preciliary trafficking; the complex binds to RHO in photoreceptor cells and promotes RHO ciliary transport.</text>
</comment>
<comment type="interaction">
    <interactant intactId="EBI-1237085">
        <id>P18085</id>
    </interactant>
    <interactant intactId="EBI-350590">
        <id>Q9UNS2</id>
        <label>COPS3</label>
    </interactant>
    <organismsDiffer>false</organismsDiffer>
    <experiments>3</experiments>
</comment>
<comment type="interaction">
    <interactant intactId="EBI-1237085">
        <id>P18085</id>
    </interactant>
    <interactant intactId="EBI-15605207">
        <id>O75154-1</id>
        <label>RAB11FIP3</label>
    </interactant>
    <organismsDiffer>false</organismsDiffer>
    <experiments>2</experiments>
</comment>
<comment type="interaction">
    <interactant intactId="EBI-1237085">
        <id>P18085</id>
    </interactant>
    <interactant intactId="EBI-947779">
        <id>Q96PM5</id>
        <label>RCHY1</label>
    </interactant>
    <organismsDiffer>false</organismsDiffer>
    <experiments>3</experiments>
</comment>
<comment type="interaction">
    <interactant intactId="EBI-1237085">
        <id>P18085</id>
    </interactant>
    <interactant intactId="EBI-742426">
        <id>Q9H190</id>
        <label>SDCBP2</label>
    </interactant>
    <organismsDiffer>false</organismsDiffer>
    <experiments>3</experiments>
</comment>
<comment type="subcellular location">
    <subcellularLocation>
        <location evidence="2">Golgi apparatus</location>
    </subcellularLocation>
    <subcellularLocation>
        <location evidence="4">Membrane</location>
        <topology evidence="4">Lipid-anchor</topology>
    </subcellularLocation>
</comment>
<comment type="similarity">
    <text evidence="4">Belongs to the small GTPase superfamily. Arf family.</text>
</comment>
<comment type="caution">
    <text evidence="4">Was originally thought to be ARF2.</text>
</comment>
<name>ARF4_HUMAN</name>
<reference key="1">
    <citation type="journal article" date="1990" name="Proc. Natl. Acad. Sci. U.S.A.">
        <title>Selective amplification of an mRNA and related pseudogene for a human ADP-ribosylation factor, a guanine nucleotide-dependent protein activator of cholera toxin.</title>
        <authorList>
            <person name="Monaco L."/>
            <person name="Murtagh J.J. Jr."/>
            <person name="Newman K.B."/>
            <person name="Tsai S.-C."/>
            <person name="Moss J."/>
            <person name="Vaughan M."/>
        </authorList>
    </citation>
    <scope>NUCLEOTIDE SEQUENCE [MRNA]</scope>
</reference>
<reference key="2">
    <citation type="journal article" date="1991" name="J. Biol. Chem.">
        <title>Human ADP-ribosylation factors. A functionally conserved family of GTP-binding proteins.</title>
        <authorList>
            <person name="Kahn R.A."/>
            <person name="Kern F.G."/>
            <person name="Clark J."/>
            <person name="Gelmann E.P."/>
            <person name="Rulka C."/>
        </authorList>
    </citation>
    <scope>NUCLEOTIDE SEQUENCE [MRNA]</scope>
</reference>
<reference key="3">
    <citation type="journal article" date="1999" name="Gene">
        <title>Cloning and characterization of the human ADP-ribosylation factor 4 gene.</title>
        <authorList>
            <person name="Lebeda R.A."/>
            <person name="Haun R.S."/>
        </authorList>
    </citation>
    <scope>NUCLEOTIDE SEQUENCE [GENOMIC DNA]</scope>
</reference>
<reference key="4">
    <citation type="submission" date="2002-03" db="EMBL/GenBank/DDBJ databases">
        <title>cDNA clones of human proteins involved in signal transduction sequenced by the Guthrie cDNA resource center (www.cdna.org).</title>
        <authorList>
            <person name="Puhl H.L. III"/>
            <person name="Ikeda S.R."/>
            <person name="Aronstam R.S."/>
        </authorList>
    </citation>
    <scope>NUCLEOTIDE SEQUENCE [LARGE SCALE MRNA]</scope>
    <source>
        <tissue>Brain</tissue>
    </source>
</reference>
<reference key="5">
    <citation type="journal article" date="2004" name="Nat. Genet.">
        <title>Complete sequencing and characterization of 21,243 full-length human cDNAs.</title>
        <authorList>
            <person name="Ota T."/>
            <person name="Suzuki Y."/>
            <person name="Nishikawa T."/>
            <person name="Otsuki T."/>
            <person name="Sugiyama T."/>
            <person name="Irie R."/>
            <person name="Wakamatsu A."/>
            <person name="Hayashi K."/>
            <person name="Sato H."/>
            <person name="Nagai K."/>
            <person name="Kimura K."/>
            <person name="Makita H."/>
            <person name="Sekine M."/>
            <person name="Obayashi M."/>
            <person name="Nishi T."/>
            <person name="Shibahara T."/>
            <person name="Tanaka T."/>
            <person name="Ishii S."/>
            <person name="Yamamoto J."/>
            <person name="Saito K."/>
            <person name="Kawai Y."/>
            <person name="Isono Y."/>
            <person name="Nakamura Y."/>
            <person name="Nagahari K."/>
            <person name="Murakami K."/>
            <person name="Yasuda T."/>
            <person name="Iwayanagi T."/>
            <person name="Wagatsuma M."/>
            <person name="Shiratori A."/>
            <person name="Sudo H."/>
            <person name="Hosoiri T."/>
            <person name="Kaku Y."/>
            <person name="Kodaira H."/>
            <person name="Kondo H."/>
            <person name="Sugawara M."/>
            <person name="Takahashi M."/>
            <person name="Kanda K."/>
            <person name="Yokoi T."/>
            <person name="Furuya T."/>
            <person name="Kikkawa E."/>
            <person name="Omura Y."/>
            <person name="Abe K."/>
            <person name="Kamihara K."/>
            <person name="Katsuta N."/>
            <person name="Sato K."/>
            <person name="Tanikawa M."/>
            <person name="Yamazaki M."/>
            <person name="Ninomiya K."/>
            <person name="Ishibashi T."/>
            <person name="Yamashita H."/>
            <person name="Murakawa K."/>
            <person name="Fujimori K."/>
            <person name="Tanai H."/>
            <person name="Kimata M."/>
            <person name="Watanabe M."/>
            <person name="Hiraoka S."/>
            <person name="Chiba Y."/>
            <person name="Ishida S."/>
            <person name="Ono Y."/>
            <person name="Takiguchi S."/>
            <person name="Watanabe S."/>
            <person name="Yosida M."/>
            <person name="Hotuta T."/>
            <person name="Kusano J."/>
            <person name="Kanehori K."/>
            <person name="Takahashi-Fujii A."/>
            <person name="Hara H."/>
            <person name="Tanase T.-O."/>
            <person name="Nomura Y."/>
            <person name="Togiya S."/>
            <person name="Komai F."/>
            <person name="Hara R."/>
            <person name="Takeuchi K."/>
            <person name="Arita M."/>
            <person name="Imose N."/>
            <person name="Musashino K."/>
            <person name="Yuuki H."/>
            <person name="Oshima A."/>
            <person name="Sasaki N."/>
            <person name="Aotsuka S."/>
            <person name="Yoshikawa Y."/>
            <person name="Matsunawa H."/>
            <person name="Ichihara T."/>
            <person name="Shiohata N."/>
            <person name="Sano S."/>
            <person name="Moriya S."/>
            <person name="Momiyama H."/>
            <person name="Satoh N."/>
            <person name="Takami S."/>
            <person name="Terashima Y."/>
            <person name="Suzuki O."/>
            <person name="Nakagawa S."/>
            <person name="Senoh A."/>
            <person name="Mizoguchi H."/>
            <person name="Goto Y."/>
            <person name="Shimizu F."/>
            <person name="Wakebe H."/>
            <person name="Hishigaki H."/>
            <person name="Watanabe T."/>
            <person name="Sugiyama A."/>
            <person name="Takemoto M."/>
            <person name="Kawakami B."/>
            <person name="Yamazaki M."/>
            <person name="Watanabe K."/>
            <person name="Kumagai A."/>
            <person name="Itakura S."/>
            <person name="Fukuzumi Y."/>
            <person name="Fujimori Y."/>
            <person name="Komiyama M."/>
            <person name="Tashiro H."/>
            <person name="Tanigami A."/>
            <person name="Fujiwara T."/>
            <person name="Ono T."/>
            <person name="Yamada K."/>
            <person name="Fujii Y."/>
            <person name="Ozaki K."/>
            <person name="Hirao M."/>
            <person name="Ohmori Y."/>
            <person name="Kawabata A."/>
            <person name="Hikiji T."/>
            <person name="Kobatake N."/>
            <person name="Inagaki H."/>
            <person name="Ikema Y."/>
            <person name="Okamoto S."/>
            <person name="Okitani R."/>
            <person name="Kawakami T."/>
            <person name="Noguchi S."/>
            <person name="Itoh T."/>
            <person name="Shigeta K."/>
            <person name="Senba T."/>
            <person name="Matsumura K."/>
            <person name="Nakajima Y."/>
            <person name="Mizuno T."/>
            <person name="Morinaga M."/>
            <person name="Sasaki M."/>
            <person name="Togashi T."/>
            <person name="Oyama M."/>
            <person name="Hata H."/>
            <person name="Watanabe M."/>
            <person name="Komatsu T."/>
            <person name="Mizushima-Sugano J."/>
            <person name="Satoh T."/>
            <person name="Shirai Y."/>
            <person name="Takahashi Y."/>
            <person name="Nakagawa K."/>
            <person name="Okumura K."/>
            <person name="Nagase T."/>
            <person name="Nomura N."/>
            <person name="Kikuchi H."/>
            <person name="Masuho Y."/>
            <person name="Yamashita R."/>
            <person name="Nakai K."/>
            <person name="Yada T."/>
            <person name="Nakamura Y."/>
            <person name="Ohara O."/>
            <person name="Isogai T."/>
            <person name="Sugano S."/>
        </authorList>
    </citation>
    <scope>NUCLEOTIDE SEQUENCE [LARGE SCALE MRNA]</scope>
    <source>
        <tissue>Cerebellum</tissue>
    </source>
</reference>
<reference key="6">
    <citation type="journal article" date="2004" name="Genome Res.">
        <title>The status, quality, and expansion of the NIH full-length cDNA project: the Mammalian Gene Collection (MGC).</title>
        <authorList>
            <consortium name="The MGC Project Team"/>
        </authorList>
    </citation>
    <scope>NUCLEOTIDE SEQUENCE [LARGE SCALE MRNA]</scope>
    <source>
        <tissue>Bone marrow</tissue>
        <tissue>Placenta</tissue>
        <tissue>Skin</tissue>
        <tissue>Urinary bladder</tissue>
    </source>
</reference>
<reference key="7">
    <citation type="journal article" date="2011" name="BMC Syst. Biol.">
        <title>Initial characterization of the human central proteome.</title>
        <authorList>
            <person name="Burkard T.R."/>
            <person name="Planyavsky M."/>
            <person name="Kaupe I."/>
            <person name="Breitwieser F.P."/>
            <person name="Buerckstuemmer T."/>
            <person name="Bennett K.L."/>
            <person name="Superti-Furga G."/>
            <person name="Colinge J."/>
        </authorList>
    </citation>
    <scope>IDENTIFICATION BY MASS SPECTROMETRY [LARGE SCALE ANALYSIS]</scope>
</reference>
<reference key="8">
    <citation type="journal article" date="2013" name="J. Proteome Res.">
        <title>Toward a comprehensive characterization of a human cancer cell phosphoproteome.</title>
        <authorList>
            <person name="Zhou H."/>
            <person name="Di Palma S."/>
            <person name="Preisinger C."/>
            <person name="Peng M."/>
            <person name="Polat A.N."/>
            <person name="Heck A.J."/>
            <person name="Mohammed S."/>
        </authorList>
    </citation>
    <scope>PHOSPHORYLATION [LARGE SCALE ANALYSIS] AT SER-147</scope>
    <scope>IDENTIFICATION BY MASS SPECTROMETRY [LARGE SCALE ANALYSIS]</scope>
    <source>
        <tissue>Cervix carcinoma</tissue>
        <tissue>Erythroleukemia</tissue>
    </source>
</reference>
<reference key="9">
    <citation type="journal article" date="2014" name="J. Proteomics">
        <title>An enzyme assisted RP-RPLC approach for in-depth analysis of human liver phosphoproteome.</title>
        <authorList>
            <person name="Bian Y."/>
            <person name="Song C."/>
            <person name="Cheng K."/>
            <person name="Dong M."/>
            <person name="Wang F."/>
            <person name="Huang J."/>
            <person name="Sun D."/>
            <person name="Wang L."/>
            <person name="Ye M."/>
            <person name="Zou H."/>
        </authorList>
    </citation>
    <scope>IDENTIFICATION BY MASS SPECTROMETRY [LARGE SCALE ANALYSIS]</scope>
    <source>
        <tissue>Liver</tissue>
    </source>
</reference>
<reference key="10">
    <citation type="journal article" date="2014" name="Nat. Commun.">
        <title>Global profiling of co- and post-translationally N-myristoylated proteomes in human cells.</title>
        <authorList>
            <person name="Thinon E."/>
            <person name="Serwa R.A."/>
            <person name="Broncel M."/>
            <person name="Brannigan J.A."/>
            <person name="Brassat U."/>
            <person name="Wright M.H."/>
            <person name="Heal W.P."/>
            <person name="Wilkinson A.J."/>
            <person name="Mann D.J."/>
            <person name="Tate E.W."/>
        </authorList>
    </citation>
    <scope>MYRISTOYLATION AT GLY-2</scope>
    <scope>CLEAVAGE OF INITIATOR METHIONINE</scope>
    <scope>IDENTIFICATION BY MASS SPECTROMETRY</scope>
</reference>
<reference key="11">
    <citation type="journal article" date="2015" name="J. Cell Sci.">
        <title>The Arf and Rab11 effector FIP3 acts synergistically with ASAP1 to direct Rabin8 in ciliary receptor targeting.</title>
        <authorList>
            <person name="Wang J."/>
            <person name="Deretic D."/>
        </authorList>
    </citation>
    <scope>FUNCTION</scope>
    <scope>INTERACTION WITH RAB11FIP3; RAB11A; ASAP1; RAB3IP AND RHO</scope>
    <scope>SUBCELLULAR LOCATION</scope>
</reference>
<reference key="12">
    <citation type="journal article" date="2015" name="Nat. Struct. Mol. Biol.">
        <title>Structure of Rab11-FIP3-Rabin8 reveals simultaneous binding of FIP3 and Rabin8 effectors to Rab11.</title>
        <authorList>
            <person name="Vetter M."/>
            <person name="Stehle R."/>
            <person name="Basquin C."/>
            <person name="Lorentzen E."/>
        </authorList>
    </citation>
    <scope>INTERACTION WITH RAB3IP; RAB11A AND RAB11FIP3</scope>
</reference>
<reference key="13">
    <citation type="journal article" date="2015" name="Proteomics">
        <title>N-terminome analysis of the human mitochondrial proteome.</title>
        <authorList>
            <person name="Vaca Jacome A.S."/>
            <person name="Rabilloud T."/>
            <person name="Schaeffer-Reiss C."/>
            <person name="Rompais M."/>
            <person name="Ayoub D."/>
            <person name="Lane L."/>
            <person name="Bairoch A."/>
            <person name="Van Dorsselaer A."/>
            <person name="Carapito C."/>
        </authorList>
    </citation>
    <scope>IDENTIFICATION BY MASS SPECTROMETRY [LARGE SCALE ANALYSIS]</scope>
</reference>
<reference key="14">
    <citation type="submission" date="2005-04" db="PDB data bank">
        <title>Structure of human ADP-ribosylation factor 4.</title>
        <authorList>
            <consortium name="Structural genomics consortium (SGC)"/>
        </authorList>
    </citation>
    <scope>X-RAY CRYSTALLOGRAPHY (2.7 ANGSTROMS) IN COMPLEX WITH GDP</scope>
</reference>
<dbReference type="EMBL" id="M36341">
    <property type="protein sequence ID" value="AAA53081.1"/>
    <property type="molecule type" value="mRNA"/>
</dbReference>
<dbReference type="EMBL" id="AF104238">
    <property type="protein sequence ID" value="AAD54674.1"/>
    <property type="molecule type" value="Genomic_DNA"/>
</dbReference>
<dbReference type="EMBL" id="AF104233">
    <property type="protein sequence ID" value="AAD54674.1"/>
    <property type="status" value="JOINED"/>
    <property type="molecule type" value="Genomic_DNA"/>
</dbReference>
<dbReference type="EMBL" id="AF104234">
    <property type="protein sequence ID" value="AAD54674.1"/>
    <property type="status" value="JOINED"/>
    <property type="molecule type" value="Genomic_DNA"/>
</dbReference>
<dbReference type="EMBL" id="AF104235">
    <property type="protein sequence ID" value="AAD54674.1"/>
    <property type="status" value="JOINED"/>
    <property type="molecule type" value="Genomic_DNA"/>
</dbReference>
<dbReference type="EMBL" id="AF104236">
    <property type="protein sequence ID" value="AAD54674.1"/>
    <property type="status" value="JOINED"/>
    <property type="molecule type" value="Genomic_DNA"/>
</dbReference>
<dbReference type="EMBL" id="AF104237">
    <property type="protein sequence ID" value="AAD54674.1"/>
    <property type="status" value="JOINED"/>
    <property type="molecule type" value="Genomic_DNA"/>
</dbReference>
<dbReference type="EMBL" id="AF493883">
    <property type="protein sequence ID" value="AAM12597.1"/>
    <property type="molecule type" value="mRNA"/>
</dbReference>
<dbReference type="EMBL" id="AK313008">
    <property type="protein sequence ID" value="BAG35844.1"/>
    <property type="molecule type" value="mRNA"/>
</dbReference>
<dbReference type="EMBL" id="BC003364">
    <property type="protein sequence ID" value="AAH03364.1"/>
    <property type="molecule type" value="mRNA"/>
</dbReference>
<dbReference type="EMBL" id="BC008753">
    <property type="protein sequence ID" value="AAH08753.1"/>
    <property type="molecule type" value="mRNA"/>
</dbReference>
<dbReference type="EMBL" id="BC016325">
    <property type="protein sequence ID" value="AAH16325.1"/>
    <property type="molecule type" value="mRNA"/>
</dbReference>
<dbReference type="EMBL" id="BC022866">
    <property type="protein sequence ID" value="AAH22866.1"/>
    <property type="molecule type" value="mRNA"/>
</dbReference>
<dbReference type="CCDS" id="CCDS2884.1"/>
<dbReference type="PIR" id="B38622">
    <property type="entry name" value="B38622"/>
</dbReference>
<dbReference type="RefSeq" id="NP_001651.1">
    <property type="nucleotide sequence ID" value="NM_001660.4"/>
</dbReference>
<dbReference type="PDB" id="1Z6X">
    <property type="method" value="X-ray"/>
    <property type="resolution" value="2.70 A"/>
    <property type="chains" value="A/B=1-180"/>
</dbReference>
<dbReference type="PDBsum" id="1Z6X"/>
<dbReference type="SMR" id="P18085"/>
<dbReference type="BioGRID" id="106873">
    <property type="interactions" value="302"/>
</dbReference>
<dbReference type="DIP" id="DIP-38214N"/>
<dbReference type="FunCoup" id="P18085">
    <property type="interactions" value="1747"/>
</dbReference>
<dbReference type="IntAct" id="P18085">
    <property type="interactions" value="108"/>
</dbReference>
<dbReference type="MINT" id="P18085"/>
<dbReference type="STRING" id="9606.ENSP00000306010"/>
<dbReference type="DrugBank" id="DB04315">
    <property type="generic name" value="Guanosine-5'-Diphosphate"/>
</dbReference>
<dbReference type="GlyGen" id="P18085">
    <property type="glycosylation" value="1 site, 1 O-linked glycan (1 site)"/>
</dbReference>
<dbReference type="iPTMnet" id="P18085"/>
<dbReference type="MetOSite" id="P18085"/>
<dbReference type="PhosphoSitePlus" id="P18085"/>
<dbReference type="SwissPalm" id="P18085"/>
<dbReference type="BioMuta" id="ARF4"/>
<dbReference type="DMDM" id="114123"/>
<dbReference type="jPOST" id="P18085"/>
<dbReference type="MassIVE" id="P18085"/>
<dbReference type="PaxDb" id="9606-ENSP00000306010"/>
<dbReference type="PeptideAtlas" id="P18085"/>
<dbReference type="PRIDE" id="P18085"/>
<dbReference type="ProteomicsDB" id="53547"/>
<dbReference type="Pumba" id="P18085"/>
<dbReference type="TopDownProteomics" id="P18085"/>
<dbReference type="Antibodypedia" id="46310">
    <property type="antibodies" value="234 antibodies from 32 providers"/>
</dbReference>
<dbReference type="DNASU" id="378"/>
<dbReference type="Ensembl" id="ENST00000303436.11">
    <property type="protein sequence ID" value="ENSP00000306010.6"/>
    <property type="gene ID" value="ENSG00000168374.11"/>
</dbReference>
<dbReference type="GeneID" id="378"/>
<dbReference type="KEGG" id="hsa:378"/>
<dbReference type="MANE-Select" id="ENST00000303436.11">
    <property type="protein sequence ID" value="ENSP00000306010.6"/>
    <property type="RefSeq nucleotide sequence ID" value="NM_001660.4"/>
    <property type="RefSeq protein sequence ID" value="NP_001651.1"/>
</dbReference>
<dbReference type="UCSC" id="uc003dix.5">
    <property type="organism name" value="human"/>
</dbReference>
<dbReference type="AGR" id="HGNC:655"/>
<dbReference type="CTD" id="378"/>
<dbReference type="DisGeNET" id="378"/>
<dbReference type="GeneCards" id="ARF4"/>
<dbReference type="HGNC" id="HGNC:655">
    <property type="gene designation" value="ARF4"/>
</dbReference>
<dbReference type="HPA" id="ENSG00000168374">
    <property type="expression patterns" value="Low tissue specificity"/>
</dbReference>
<dbReference type="MIM" id="601177">
    <property type="type" value="gene"/>
</dbReference>
<dbReference type="neXtProt" id="NX_P18085"/>
<dbReference type="OpenTargets" id="ENSG00000168374"/>
<dbReference type="PharmGKB" id="PA24937"/>
<dbReference type="VEuPathDB" id="HostDB:ENSG00000168374"/>
<dbReference type="eggNOG" id="KOG0070">
    <property type="taxonomic scope" value="Eukaryota"/>
</dbReference>
<dbReference type="GeneTree" id="ENSGT00940000156297"/>
<dbReference type="HOGENOM" id="CLU_040729_9_1_1"/>
<dbReference type="InParanoid" id="P18085"/>
<dbReference type="OMA" id="DWLCNEL"/>
<dbReference type="OrthoDB" id="2011769at2759"/>
<dbReference type="PAN-GO" id="P18085">
    <property type="GO annotations" value="5 GO annotations based on evolutionary models"/>
</dbReference>
<dbReference type="PhylomeDB" id="P18085"/>
<dbReference type="TreeFam" id="TF300808"/>
<dbReference type="PathwayCommons" id="P18085"/>
<dbReference type="Reactome" id="R-HSA-5620916">
    <property type="pathway name" value="VxPx cargo-targeting to cilium"/>
</dbReference>
<dbReference type="Reactome" id="R-HSA-6807878">
    <property type="pathway name" value="COPI-mediated anterograde transport"/>
</dbReference>
<dbReference type="Reactome" id="R-HSA-6811434">
    <property type="pathway name" value="COPI-dependent Golgi-to-ER retrograde traffic"/>
</dbReference>
<dbReference type="SignaLink" id="P18085"/>
<dbReference type="SIGNOR" id="P18085"/>
<dbReference type="BioGRID-ORCS" id="378">
    <property type="hits" value="494 hits in 1128 CRISPR screens"/>
</dbReference>
<dbReference type="ChiTaRS" id="ARF4">
    <property type="organism name" value="human"/>
</dbReference>
<dbReference type="EvolutionaryTrace" id="P18085"/>
<dbReference type="GeneWiki" id="ARF4"/>
<dbReference type="GenomeRNAi" id="378"/>
<dbReference type="Pharos" id="P18085">
    <property type="development level" value="Tbio"/>
</dbReference>
<dbReference type="PRO" id="PR:P18085"/>
<dbReference type="Proteomes" id="UP000005640">
    <property type="component" value="Chromosome 3"/>
</dbReference>
<dbReference type="RNAct" id="P18085">
    <property type="molecule type" value="protein"/>
</dbReference>
<dbReference type="Bgee" id="ENSG00000168374">
    <property type="expression patterns" value="Expressed in tibia and 215 other cell types or tissues"/>
</dbReference>
<dbReference type="ExpressionAtlas" id="P18085">
    <property type="expression patterns" value="baseline and differential"/>
</dbReference>
<dbReference type="GO" id="GO:0005737">
    <property type="term" value="C:cytoplasm"/>
    <property type="evidence" value="ECO:0000318"/>
    <property type="project" value="GO_Central"/>
</dbReference>
<dbReference type="GO" id="GO:0005829">
    <property type="term" value="C:cytosol"/>
    <property type="evidence" value="ECO:0000314"/>
    <property type="project" value="UniProtKB"/>
</dbReference>
<dbReference type="GO" id="GO:0043197">
    <property type="term" value="C:dendritic spine"/>
    <property type="evidence" value="ECO:0000314"/>
    <property type="project" value="MGI"/>
</dbReference>
<dbReference type="GO" id="GO:0070062">
    <property type="term" value="C:extracellular exosome"/>
    <property type="evidence" value="ECO:0007005"/>
    <property type="project" value="UniProtKB"/>
</dbReference>
<dbReference type="GO" id="GO:0098978">
    <property type="term" value="C:glutamatergic synapse"/>
    <property type="evidence" value="ECO:0007669"/>
    <property type="project" value="Ensembl"/>
</dbReference>
<dbReference type="GO" id="GO:0000139">
    <property type="term" value="C:Golgi membrane"/>
    <property type="evidence" value="ECO:0000314"/>
    <property type="project" value="UniProtKB"/>
</dbReference>
<dbReference type="GO" id="GO:0016020">
    <property type="term" value="C:membrane"/>
    <property type="evidence" value="ECO:0007005"/>
    <property type="project" value="UniProtKB"/>
</dbReference>
<dbReference type="GO" id="GO:0005886">
    <property type="term" value="C:plasma membrane"/>
    <property type="evidence" value="ECO:0000318"/>
    <property type="project" value="GO_Central"/>
</dbReference>
<dbReference type="GO" id="GO:0032587">
    <property type="term" value="C:ruffle membrane"/>
    <property type="evidence" value="ECO:0000314"/>
    <property type="project" value="UniProtKB"/>
</dbReference>
<dbReference type="GO" id="GO:0005154">
    <property type="term" value="F:epidermal growth factor receptor binding"/>
    <property type="evidence" value="ECO:0000314"/>
    <property type="project" value="UniProtKB"/>
</dbReference>
<dbReference type="GO" id="GO:0005525">
    <property type="term" value="F:GTP binding"/>
    <property type="evidence" value="ECO:0000314"/>
    <property type="project" value="UniProtKB"/>
</dbReference>
<dbReference type="GO" id="GO:0003924">
    <property type="term" value="F:GTPase activity"/>
    <property type="evidence" value="ECO:0000304"/>
    <property type="project" value="Reactome"/>
</dbReference>
<dbReference type="GO" id="GO:0005085">
    <property type="term" value="F:guanyl-nucleotide exchange factor activity"/>
    <property type="evidence" value="ECO:0000304"/>
    <property type="project" value="Reactome"/>
</dbReference>
<dbReference type="GO" id="GO:0106274">
    <property type="term" value="F:NAD+-protein-arginine ADP-ribosyltransferase activity"/>
    <property type="evidence" value="ECO:0000314"/>
    <property type="project" value="UniProtKB"/>
</dbReference>
<dbReference type="GO" id="GO:1990583">
    <property type="term" value="F:phospholipase D activator activity"/>
    <property type="evidence" value="ECO:0000314"/>
    <property type="project" value="UniProtKB"/>
</dbReference>
<dbReference type="GO" id="GO:0045176">
    <property type="term" value="P:apical protein localization"/>
    <property type="evidence" value="ECO:0007669"/>
    <property type="project" value="Ensembl"/>
</dbReference>
<dbReference type="GO" id="GO:0016477">
    <property type="term" value="P:cell migration"/>
    <property type="evidence" value="ECO:0000314"/>
    <property type="project" value="UniProtKB"/>
</dbReference>
<dbReference type="GO" id="GO:0060271">
    <property type="term" value="P:cilium assembly"/>
    <property type="evidence" value="ECO:0000304"/>
    <property type="project" value="Reactome"/>
</dbReference>
<dbReference type="GO" id="GO:0060996">
    <property type="term" value="P:dendritic spine development"/>
    <property type="evidence" value="ECO:0000314"/>
    <property type="project" value="MGI"/>
</dbReference>
<dbReference type="GO" id="GO:0006888">
    <property type="term" value="P:endoplasmic reticulum to Golgi vesicle-mediated transport"/>
    <property type="evidence" value="ECO:0000304"/>
    <property type="project" value="Reactome"/>
</dbReference>
<dbReference type="GO" id="GO:0007173">
    <property type="term" value="P:epidermal growth factor receptor signaling pathway"/>
    <property type="evidence" value="ECO:0007669"/>
    <property type="project" value="Ensembl"/>
</dbReference>
<dbReference type="GO" id="GO:0045197">
    <property type="term" value="P:establishment or maintenance of epithelial cell apical/basal polarity"/>
    <property type="evidence" value="ECO:0007669"/>
    <property type="project" value="Ensembl"/>
</dbReference>
<dbReference type="GO" id="GO:0006886">
    <property type="term" value="P:intracellular protein transport"/>
    <property type="evidence" value="ECO:0000318"/>
    <property type="project" value="GO_Central"/>
</dbReference>
<dbReference type="GO" id="GO:0007612">
    <property type="term" value="P:learning"/>
    <property type="evidence" value="ECO:0007669"/>
    <property type="project" value="Ensembl"/>
</dbReference>
<dbReference type="GO" id="GO:0043066">
    <property type="term" value="P:negative regulation of apoptotic process"/>
    <property type="evidence" value="ECO:0000314"/>
    <property type="project" value="UniProtKB"/>
</dbReference>
<dbReference type="GO" id="GO:0045944">
    <property type="term" value="P:positive regulation of transcription by RNA polymerase II"/>
    <property type="evidence" value="ECO:0000314"/>
    <property type="project" value="UniProtKB"/>
</dbReference>
<dbReference type="GO" id="GO:0061512">
    <property type="term" value="P:protein localization to cilium"/>
    <property type="evidence" value="ECO:0007669"/>
    <property type="project" value="Ensembl"/>
</dbReference>
<dbReference type="GO" id="GO:1902017">
    <property type="term" value="P:regulation of cilium assembly"/>
    <property type="evidence" value="ECO:0000314"/>
    <property type="project" value="UniProtKB"/>
</dbReference>
<dbReference type="GO" id="GO:0099175">
    <property type="term" value="P:regulation of postsynapse organization"/>
    <property type="evidence" value="ECO:0007669"/>
    <property type="project" value="Ensembl"/>
</dbReference>
<dbReference type="GO" id="GO:2000377">
    <property type="term" value="P:regulation of reactive oxygen species metabolic process"/>
    <property type="evidence" value="ECO:0000314"/>
    <property type="project" value="UniProtKB"/>
</dbReference>
<dbReference type="GO" id="GO:0048678">
    <property type="term" value="P:response to axon injury"/>
    <property type="evidence" value="ECO:0007669"/>
    <property type="project" value="Ensembl"/>
</dbReference>
<dbReference type="GO" id="GO:0006890">
    <property type="term" value="P:retrograde vesicle-mediated transport, Golgi to endoplasmic reticulum"/>
    <property type="evidence" value="ECO:0000316"/>
    <property type="project" value="WormBase"/>
</dbReference>
<dbReference type="GO" id="GO:0016192">
    <property type="term" value="P:vesicle-mediated transport"/>
    <property type="evidence" value="ECO:0000318"/>
    <property type="project" value="GO_Central"/>
</dbReference>
<dbReference type="CDD" id="cd04150">
    <property type="entry name" value="Arf1_5_like"/>
    <property type="match status" value="1"/>
</dbReference>
<dbReference type="FunFam" id="3.40.50.300:FF:000024">
    <property type="entry name" value="ADP-ribosylation factor 1"/>
    <property type="match status" value="1"/>
</dbReference>
<dbReference type="Gene3D" id="3.40.50.300">
    <property type="entry name" value="P-loop containing nucleotide triphosphate hydrolases"/>
    <property type="match status" value="1"/>
</dbReference>
<dbReference type="InterPro" id="IPR045872">
    <property type="entry name" value="Arf1-5-like"/>
</dbReference>
<dbReference type="InterPro" id="IPR027417">
    <property type="entry name" value="P-loop_NTPase"/>
</dbReference>
<dbReference type="InterPro" id="IPR005225">
    <property type="entry name" value="Small_GTP-bd"/>
</dbReference>
<dbReference type="InterPro" id="IPR024156">
    <property type="entry name" value="Small_GTPase_ARF"/>
</dbReference>
<dbReference type="InterPro" id="IPR006689">
    <property type="entry name" value="Small_GTPase_ARF/SAR"/>
</dbReference>
<dbReference type="NCBIfam" id="TIGR00231">
    <property type="entry name" value="small_GTP"/>
    <property type="match status" value="1"/>
</dbReference>
<dbReference type="PANTHER" id="PTHR11711">
    <property type="entry name" value="ADP RIBOSYLATION FACTOR-RELATED"/>
    <property type="match status" value="1"/>
</dbReference>
<dbReference type="Pfam" id="PF00025">
    <property type="entry name" value="Arf"/>
    <property type="match status" value="1"/>
</dbReference>
<dbReference type="PRINTS" id="PR00328">
    <property type="entry name" value="SAR1GTPBP"/>
</dbReference>
<dbReference type="SMART" id="SM00177">
    <property type="entry name" value="ARF"/>
    <property type="match status" value="1"/>
</dbReference>
<dbReference type="SMART" id="SM00175">
    <property type="entry name" value="RAB"/>
    <property type="match status" value="1"/>
</dbReference>
<dbReference type="SMART" id="SM00178">
    <property type="entry name" value="SAR"/>
    <property type="match status" value="1"/>
</dbReference>
<dbReference type="SUPFAM" id="SSF52540">
    <property type="entry name" value="P-loop containing nucleoside triphosphate hydrolases"/>
    <property type="match status" value="1"/>
</dbReference>
<dbReference type="PROSITE" id="PS51417">
    <property type="entry name" value="ARF"/>
    <property type="match status" value="1"/>
</dbReference>
<organism>
    <name type="scientific">Homo sapiens</name>
    <name type="common">Human</name>
    <dbReference type="NCBI Taxonomy" id="9606"/>
    <lineage>
        <taxon>Eukaryota</taxon>
        <taxon>Metazoa</taxon>
        <taxon>Chordata</taxon>
        <taxon>Craniata</taxon>
        <taxon>Vertebrata</taxon>
        <taxon>Euteleostomi</taxon>
        <taxon>Mammalia</taxon>
        <taxon>Eutheria</taxon>
        <taxon>Euarchontoglires</taxon>
        <taxon>Primates</taxon>
        <taxon>Haplorrhini</taxon>
        <taxon>Catarrhini</taxon>
        <taxon>Hominidae</taxon>
        <taxon>Homo</taxon>
    </lineage>
</organism>
<protein>
    <recommendedName>
        <fullName>ADP-ribosylation factor 4</fullName>
    </recommendedName>
</protein>